<dbReference type="EC" id="2.4.2.17" evidence="1"/>
<dbReference type="EMBL" id="AP008231">
    <property type="protein sequence ID" value="BAD78944.1"/>
    <property type="molecule type" value="Genomic_DNA"/>
</dbReference>
<dbReference type="RefSeq" id="WP_011243066.1">
    <property type="nucleotide sequence ID" value="NZ_CP085785.1"/>
</dbReference>
<dbReference type="SMR" id="Q5N426"/>
<dbReference type="GeneID" id="72429629"/>
<dbReference type="KEGG" id="syc:syc0754_d"/>
<dbReference type="eggNOG" id="COG0040">
    <property type="taxonomic scope" value="Bacteria"/>
</dbReference>
<dbReference type="UniPathway" id="UPA00031">
    <property type="reaction ID" value="UER00006"/>
</dbReference>
<dbReference type="Proteomes" id="UP000001175">
    <property type="component" value="Chromosome"/>
</dbReference>
<dbReference type="GO" id="GO:0005737">
    <property type="term" value="C:cytoplasm"/>
    <property type="evidence" value="ECO:0007669"/>
    <property type="project" value="UniProtKB-SubCell"/>
</dbReference>
<dbReference type="GO" id="GO:0005524">
    <property type="term" value="F:ATP binding"/>
    <property type="evidence" value="ECO:0007669"/>
    <property type="project" value="UniProtKB-KW"/>
</dbReference>
<dbReference type="GO" id="GO:0003879">
    <property type="term" value="F:ATP phosphoribosyltransferase activity"/>
    <property type="evidence" value="ECO:0007669"/>
    <property type="project" value="UniProtKB-UniRule"/>
</dbReference>
<dbReference type="GO" id="GO:0000105">
    <property type="term" value="P:L-histidine biosynthetic process"/>
    <property type="evidence" value="ECO:0007669"/>
    <property type="project" value="UniProtKB-UniRule"/>
</dbReference>
<dbReference type="CDD" id="cd13595">
    <property type="entry name" value="PBP2_HisGs"/>
    <property type="match status" value="1"/>
</dbReference>
<dbReference type="FunFam" id="3.40.190.10:FF:000008">
    <property type="entry name" value="ATP phosphoribosyltransferase"/>
    <property type="match status" value="1"/>
</dbReference>
<dbReference type="Gene3D" id="3.40.190.10">
    <property type="entry name" value="Periplasmic binding protein-like II"/>
    <property type="match status" value="2"/>
</dbReference>
<dbReference type="HAMAP" id="MF_01018">
    <property type="entry name" value="HisG_Short"/>
    <property type="match status" value="1"/>
</dbReference>
<dbReference type="InterPro" id="IPR013820">
    <property type="entry name" value="ATP_PRibTrfase_cat"/>
</dbReference>
<dbReference type="InterPro" id="IPR018198">
    <property type="entry name" value="ATP_PRibTrfase_CS"/>
</dbReference>
<dbReference type="InterPro" id="IPR001348">
    <property type="entry name" value="ATP_PRibTrfase_HisG"/>
</dbReference>
<dbReference type="InterPro" id="IPR024893">
    <property type="entry name" value="ATP_PRibTrfase_HisG_short"/>
</dbReference>
<dbReference type="NCBIfam" id="TIGR00070">
    <property type="entry name" value="hisG"/>
    <property type="match status" value="1"/>
</dbReference>
<dbReference type="PANTHER" id="PTHR21403:SF8">
    <property type="entry name" value="ATP PHOSPHORIBOSYLTRANSFERASE"/>
    <property type="match status" value="1"/>
</dbReference>
<dbReference type="PANTHER" id="PTHR21403">
    <property type="entry name" value="ATP PHOSPHORIBOSYLTRANSFERASE ATP-PRTASE"/>
    <property type="match status" value="1"/>
</dbReference>
<dbReference type="Pfam" id="PF01634">
    <property type="entry name" value="HisG"/>
    <property type="match status" value="1"/>
</dbReference>
<dbReference type="SUPFAM" id="SSF53850">
    <property type="entry name" value="Periplasmic binding protein-like II"/>
    <property type="match status" value="1"/>
</dbReference>
<dbReference type="PROSITE" id="PS01316">
    <property type="entry name" value="ATP_P_PHORIBOSYLTR"/>
    <property type="match status" value="1"/>
</dbReference>
<name>HIS1_SYNP6</name>
<comment type="function">
    <text evidence="1">Catalyzes the condensation of ATP and 5-phosphoribose 1-diphosphate to form N'-(5'-phosphoribosyl)-ATP (PR-ATP). Has a crucial role in the pathway because the rate of histidine biosynthesis seems to be controlled primarily by regulation of HisG enzymatic activity.</text>
</comment>
<comment type="catalytic activity">
    <reaction evidence="1">
        <text>1-(5-phospho-beta-D-ribosyl)-ATP + diphosphate = 5-phospho-alpha-D-ribose 1-diphosphate + ATP</text>
        <dbReference type="Rhea" id="RHEA:18473"/>
        <dbReference type="ChEBI" id="CHEBI:30616"/>
        <dbReference type="ChEBI" id="CHEBI:33019"/>
        <dbReference type="ChEBI" id="CHEBI:58017"/>
        <dbReference type="ChEBI" id="CHEBI:73183"/>
        <dbReference type="EC" id="2.4.2.17"/>
    </reaction>
</comment>
<comment type="pathway">
    <text evidence="1">Amino-acid biosynthesis; L-histidine biosynthesis; L-histidine from 5-phospho-alpha-D-ribose 1-diphosphate: step 1/9.</text>
</comment>
<comment type="subunit">
    <text evidence="1">Heteromultimer composed of HisG and HisZ subunits.</text>
</comment>
<comment type="subcellular location">
    <subcellularLocation>
        <location evidence="1">Cytoplasm</location>
    </subcellularLocation>
</comment>
<comment type="domain">
    <text>Lacks the C-terminal regulatory region which is replaced by HisZ.</text>
</comment>
<comment type="similarity">
    <text evidence="1">Belongs to the ATP phosphoribosyltransferase family. Short subfamily.</text>
</comment>
<proteinExistence type="inferred from homology"/>
<feature type="chain" id="PRO_0000229335" description="ATP phosphoribosyltransferase">
    <location>
        <begin position="1"/>
        <end position="218"/>
    </location>
</feature>
<keyword id="KW-0028">Amino-acid biosynthesis</keyword>
<keyword id="KW-0067">ATP-binding</keyword>
<keyword id="KW-0963">Cytoplasm</keyword>
<keyword id="KW-0328">Glycosyltransferase</keyword>
<keyword id="KW-0368">Histidine biosynthesis</keyword>
<keyword id="KW-0547">Nucleotide-binding</keyword>
<keyword id="KW-0808">Transferase</keyword>
<gene>
    <name evidence="1" type="primary">hisG</name>
    <name type="ordered locus">syc0754_d</name>
</gene>
<protein>
    <recommendedName>
        <fullName evidence="1">ATP phosphoribosyltransferase</fullName>
        <shortName evidence="1">ATP-PRT</shortName>
        <shortName evidence="1">ATP-PRTase</shortName>
        <ecNumber evidence="1">2.4.2.17</ecNumber>
    </recommendedName>
</protein>
<accession>Q5N426</accession>
<reference key="1">
    <citation type="journal article" date="2007" name="Photosyn. Res.">
        <title>Complete nucleotide sequence of the freshwater unicellular cyanobacterium Synechococcus elongatus PCC 6301 chromosome: gene content and organization.</title>
        <authorList>
            <person name="Sugita C."/>
            <person name="Ogata K."/>
            <person name="Shikata M."/>
            <person name="Jikuya H."/>
            <person name="Takano J."/>
            <person name="Furumichi M."/>
            <person name="Kanehisa M."/>
            <person name="Omata T."/>
            <person name="Sugiura M."/>
            <person name="Sugita M."/>
        </authorList>
    </citation>
    <scope>NUCLEOTIDE SEQUENCE [LARGE SCALE GENOMIC DNA]</scope>
    <source>
        <strain>ATCC 27144 / PCC 6301 / SAUG 1402/1</strain>
    </source>
</reference>
<organism>
    <name type="scientific">Synechococcus sp. (strain ATCC 27144 / PCC 6301 / SAUG 1402/1)</name>
    <name type="common">Anacystis nidulans</name>
    <dbReference type="NCBI Taxonomy" id="269084"/>
    <lineage>
        <taxon>Bacteria</taxon>
        <taxon>Bacillati</taxon>
        <taxon>Cyanobacteriota</taxon>
        <taxon>Cyanophyceae</taxon>
        <taxon>Synechococcales</taxon>
        <taxon>Synechococcaceae</taxon>
        <taxon>Synechococcus</taxon>
    </lineage>
</organism>
<evidence type="ECO:0000255" key="1">
    <source>
        <dbReference type="HAMAP-Rule" id="MF_01018"/>
    </source>
</evidence>
<sequence>MLTIALPKGALLKDSIRLLQSAGLDFSAFLEPGNRQLQILDRQERAKALLVRNSDVPVYVEYGQAQLGVVGYDVLREKTARVAQLIDLRFGGCRMSIAVKASSPYRSVLDLPAHCRIASKFVHCARDYFHNLDLPVEIVPLSGSVELGPITGMSEAIVDLVATGQTLRENGLVEIETLFDSTARLIANPLAYRINADGISELIEELRQSVTQAIAATC</sequence>